<protein>
    <recommendedName>
        <fullName evidence="1">Phosphoribosyl-AMP cyclohydrolase</fullName>
        <shortName evidence="1">PRA-CH</shortName>
        <ecNumber evidence="1">3.5.4.19</ecNumber>
    </recommendedName>
</protein>
<proteinExistence type="inferred from homology"/>
<evidence type="ECO:0000255" key="1">
    <source>
        <dbReference type="HAMAP-Rule" id="MF_01021"/>
    </source>
</evidence>
<dbReference type="EC" id="3.5.4.19" evidence="1"/>
<dbReference type="EMBL" id="AE010299">
    <property type="protein sequence ID" value="AAM04341.1"/>
    <property type="molecule type" value="Genomic_DNA"/>
</dbReference>
<dbReference type="RefSeq" id="WP_011020946.1">
    <property type="nucleotide sequence ID" value="NC_003552.1"/>
</dbReference>
<dbReference type="SMR" id="Q8TS96"/>
<dbReference type="FunCoup" id="Q8TS96">
    <property type="interactions" value="78"/>
</dbReference>
<dbReference type="STRING" id="188937.MA_0908"/>
<dbReference type="EnsemblBacteria" id="AAM04341">
    <property type="protein sequence ID" value="AAM04341"/>
    <property type="gene ID" value="MA_0908"/>
</dbReference>
<dbReference type="GeneID" id="1472798"/>
<dbReference type="KEGG" id="mac:MA_0908"/>
<dbReference type="HOGENOM" id="CLU_048577_5_3_2"/>
<dbReference type="InParanoid" id="Q8TS96"/>
<dbReference type="OrthoDB" id="5853at2157"/>
<dbReference type="PhylomeDB" id="Q8TS96"/>
<dbReference type="UniPathway" id="UPA00031">
    <property type="reaction ID" value="UER00008"/>
</dbReference>
<dbReference type="Proteomes" id="UP000002487">
    <property type="component" value="Chromosome"/>
</dbReference>
<dbReference type="GO" id="GO:0005737">
    <property type="term" value="C:cytoplasm"/>
    <property type="evidence" value="ECO:0007669"/>
    <property type="project" value="UniProtKB-SubCell"/>
</dbReference>
<dbReference type="GO" id="GO:0000287">
    <property type="term" value="F:magnesium ion binding"/>
    <property type="evidence" value="ECO:0007669"/>
    <property type="project" value="UniProtKB-UniRule"/>
</dbReference>
<dbReference type="GO" id="GO:0004635">
    <property type="term" value="F:phosphoribosyl-AMP cyclohydrolase activity"/>
    <property type="evidence" value="ECO:0007669"/>
    <property type="project" value="UniProtKB-UniRule"/>
</dbReference>
<dbReference type="GO" id="GO:0008270">
    <property type="term" value="F:zinc ion binding"/>
    <property type="evidence" value="ECO:0007669"/>
    <property type="project" value="UniProtKB-UniRule"/>
</dbReference>
<dbReference type="GO" id="GO:0000105">
    <property type="term" value="P:L-histidine biosynthetic process"/>
    <property type="evidence" value="ECO:0007669"/>
    <property type="project" value="UniProtKB-UniRule"/>
</dbReference>
<dbReference type="FunFam" id="3.10.20.810:FF:000001">
    <property type="entry name" value="Histidine biosynthesis bifunctional protein HisIE"/>
    <property type="match status" value="1"/>
</dbReference>
<dbReference type="Gene3D" id="4.10.80.70">
    <property type="match status" value="1"/>
</dbReference>
<dbReference type="Gene3D" id="3.10.20.810">
    <property type="entry name" value="Phosphoribosyl-AMP cyclohydrolase"/>
    <property type="match status" value="1"/>
</dbReference>
<dbReference type="HAMAP" id="MF_01021">
    <property type="entry name" value="HisI"/>
    <property type="match status" value="1"/>
</dbReference>
<dbReference type="InterPro" id="IPR026660">
    <property type="entry name" value="PRA-CH"/>
</dbReference>
<dbReference type="InterPro" id="IPR002496">
    <property type="entry name" value="PRib_AMP_CycHydrolase_dom"/>
</dbReference>
<dbReference type="InterPro" id="IPR038019">
    <property type="entry name" value="PRib_AMP_CycHydrolase_sf"/>
</dbReference>
<dbReference type="NCBIfam" id="NF000768">
    <property type="entry name" value="PRK00051.1"/>
    <property type="match status" value="1"/>
</dbReference>
<dbReference type="PANTHER" id="PTHR42945">
    <property type="entry name" value="HISTIDINE BIOSYNTHESIS BIFUNCTIONAL PROTEIN"/>
    <property type="match status" value="1"/>
</dbReference>
<dbReference type="PANTHER" id="PTHR42945:SF1">
    <property type="entry name" value="HISTIDINE BIOSYNTHESIS BIFUNCTIONAL PROTEIN HIS7"/>
    <property type="match status" value="1"/>
</dbReference>
<dbReference type="Pfam" id="PF01502">
    <property type="entry name" value="PRA-CH"/>
    <property type="match status" value="1"/>
</dbReference>
<dbReference type="SUPFAM" id="SSF141734">
    <property type="entry name" value="HisI-like"/>
    <property type="match status" value="1"/>
</dbReference>
<gene>
    <name evidence="1" type="primary">hisI</name>
    <name type="ordered locus">MA_0908</name>
</gene>
<organism>
    <name type="scientific">Methanosarcina acetivorans (strain ATCC 35395 / DSM 2834 / JCM 12185 / C2A)</name>
    <dbReference type="NCBI Taxonomy" id="188937"/>
    <lineage>
        <taxon>Archaea</taxon>
        <taxon>Methanobacteriati</taxon>
        <taxon>Methanobacteriota</taxon>
        <taxon>Stenosarchaea group</taxon>
        <taxon>Methanomicrobia</taxon>
        <taxon>Methanosarcinales</taxon>
        <taxon>Methanosarcinaceae</taxon>
        <taxon>Methanosarcina</taxon>
    </lineage>
</organism>
<accession>Q8TS96</accession>
<name>HIS3_METAC</name>
<comment type="function">
    <text evidence="1">Catalyzes the hydrolysis of the adenine ring of phosphoribosyl-AMP.</text>
</comment>
<comment type="catalytic activity">
    <reaction evidence="1">
        <text>1-(5-phospho-beta-D-ribosyl)-5'-AMP + H2O = 1-(5-phospho-beta-D-ribosyl)-5-[(5-phospho-beta-D-ribosylamino)methylideneamino]imidazole-4-carboxamide</text>
        <dbReference type="Rhea" id="RHEA:20049"/>
        <dbReference type="ChEBI" id="CHEBI:15377"/>
        <dbReference type="ChEBI" id="CHEBI:58435"/>
        <dbReference type="ChEBI" id="CHEBI:59457"/>
        <dbReference type="EC" id="3.5.4.19"/>
    </reaction>
</comment>
<comment type="cofactor">
    <cofactor evidence="1">
        <name>Mg(2+)</name>
        <dbReference type="ChEBI" id="CHEBI:18420"/>
    </cofactor>
    <text evidence="1">Binds 1 Mg(2+) ion per subunit.</text>
</comment>
<comment type="cofactor">
    <cofactor evidence="1">
        <name>Zn(2+)</name>
        <dbReference type="ChEBI" id="CHEBI:29105"/>
    </cofactor>
    <text evidence="1">Binds 1 zinc ion per subunit.</text>
</comment>
<comment type="pathway">
    <text evidence="1">Amino-acid biosynthesis; L-histidine biosynthesis; L-histidine from 5-phospho-alpha-D-ribose 1-diphosphate: step 3/9.</text>
</comment>
<comment type="subunit">
    <text evidence="1">Homodimer.</text>
</comment>
<comment type="subcellular location">
    <subcellularLocation>
        <location evidence="1">Cytoplasm</location>
    </subcellularLocation>
</comment>
<comment type="similarity">
    <text evidence="1">Belongs to the PRA-CH family.</text>
</comment>
<feature type="chain" id="PRO_0000136506" description="Phosphoribosyl-AMP cyclohydrolase">
    <location>
        <begin position="1"/>
        <end position="120"/>
    </location>
</feature>
<feature type="binding site" evidence="1">
    <location>
        <position position="75"/>
    </location>
    <ligand>
        <name>Mg(2+)</name>
        <dbReference type="ChEBI" id="CHEBI:18420"/>
    </ligand>
</feature>
<feature type="binding site" evidence="1">
    <location>
        <position position="76"/>
    </location>
    <ligand>
        <name>Zn(2+)</name>
        <dbReference type="ChEBI" id="CHEBI:29105"/>
        <note>ligand shared between dimeric partners</note>
    </ligand>
</feature>
<feature type="binding site" evidence="1">
    <location>
        <position position="77"/>
    </location>
    <ligand>
        <name>Mg(2+)</name>
        <dbReference type="ChEBI" id="CHEBI:18420"/>
    </ligand>
</feature>
<feature type="binding site" evidence="1">
    <location>
        <position position="79"/>
    </location>
    <ligand>
        <name>Mg(2+)</name>
        <dbReference type="ChEBI" id="CHEBI:18420"/>
    </ligand>
</feature>
<feature type="binding site" evidence="1">
    <location>
        <position position="92"/>
    </location>
    <ligand>
        <name>Zn(2+)</name>
        <dbReference type="ChEBI" id="CHEBI:29105"/>
        <note>ligand shared between dimeric partners</note>
    </ligand>
</feature>
<feature type="binding site" evidence="1">
    <location>
        <position position="99"/>
    </location>
    <ligand>
        <name>Zn(2+)</name>
        <dbReference type="ChEBI" id="CHEBI:29105"/>
        <note>ligand shared between dimeric partners</note>
    </ligand>
</feature>
<keyword id="KW-0028">Amino-acid biosynthesis</keyword>
<keyword id="KW-0963">Cytoplasm</keyword>
<keyword id="KW-0368">Histidine biosynthesis</keyword>
<keyword id="KW-0378">Hydrolase</keyword>
<keyword id="KW-0460">Magnesium</keyword>
<keyword id="KW-0479">Metal-binding</keyword>
<keyword id="KW-1185">Reference proteome</keyword>
<keyword id="KW-0862">Zinc</keyword>
<sequence>MIDLDTLKYENGLILAVVQDQKSREVLMCAYMNREALEKTVKTGIAHFWSRSRKQLWKKGETSGHLQKVKEIRIDCDMDSVLLLVEQVGGACHMGYRSCFYRNLKGEVVGEKVFEPKDVY</sequence>
<reference key="1">
    <citation type="journal article" date="2002" name="Genome Res.">
        <title>The genome of Methanosarcina acetivorans reveals extensive metabolic and physiological diversity.</title>
        <authorList>
            <person name="Galagan J.E."/>
            <person name="Nusbaum C."/>
            <person name="Roy A."/>
            <person name="Endrizzi M.G."/>
            <person name="Macdonald P."/>
            <person name="FitzHugh W."/>
            <person name="Calvo S."/>
            <person name="Engels R."/>
            <person name="Smirnov S."/>
            <person name="Atnoor D."/>
            <person name="Brown A."/>
            <person name="Allen N."/>
            <person name="Naylor J."/>
            <person name="Stange-Thomann N."/>
            <person name="DeArellano K."/>
            <person name="Johnson R."/>
            <person name="Linton L."/>
            <person name="McEwan P."/>
            <person name="McKernan K."/>
            <person name="Talamas J."/>
            <person name="Tirrell A."/>
            <person name="Ye W."/>
            <person name="Zimmer A."/>
            <person name="Barber R.D."/>
            <person name="Cann I."/>
            <person name="Graham D.E."/>
            <person name="Grahame D.A."/>
            <person name="Guss A.M."/>
            <person name="Hedderich R."/>
            <person name="Ingram-Smith C."/>
            <person name="Kuettner H.C."/>
            <person name="Krzycki J.A."/>
            <person name="Leigh J.A."/>
            <person name="Li W."/>
            <person name="Liu J."/>
            <person name="Mukhopadhyay B."/>
            <person name="Reeve J.N."/>
            <person name="Smith K."/>
            <person name="Springer T.A."/>
            <person name="Umayam L.A."/>
            <person name="White O."/>
            <person name="White R.H."/>
            <person name="de Macario E.C."/>
            <person name="Ferry J.G."/>
            <person name="Jarrell K.F."/>
            <person name="Jing H."/>
            <person name="Macario A.J.L."/>
            <person name="Paulsen I.T."/>
            <person name="Pritchett M."/>
            <person name="Sowers K.R."/>
            <person name="Swanson R.V."/>
            <person name="Zinder S.H."/>
            <person name="Lander E."/>
            <person name="Metcalf W.W."/>
            <person name="Birren B."/>
        </authorList>
    </citation>
    <scope>NUCLEOTIDE SEQUENCE [LARGE SCALE GENOMIC DNA]</scope>
    <source>
        <strain>ATCC 35395 / DSM 2834 / JCM 12185 / C2A</strain>
    </source>
</reference>